<gene>
    <name evidence="1" type="primary">uppP2</name>
    <name type="ordered locus">BLi03290</name>
    <name type="ordered locus">BL02576</name>
</gene>
<sequence length="276" mass="30370">MNIWDIIVAIILGIVEGLTEYAPVSSTGHMIIVDDVWLKSKELLTPEAANTFKVVIQLGSILAVAFVFKDRILNLLGMKKNITEEQKSGNRLSIAQIAVGLVPAAVLGFLFEDYIDQYLFSVRTVAVGLIAGAVLMLAADWINRRKDTTDSVDRMTYKQALGMGLFQCLALWPGFSRSGSTISGGVILGLSHRAAADFTFIMAIPIMMGASLLSLIKNWAYLSADLLPFFIAGFISAFIVALFVVRFFLRLINKIKLVPFAIYRIVLGLLLFILFL</sequence>
<dbReference type="EC" id="3.6.1.27" evidence="1"/>
<dbReference type="EMBL" id="AE017333">
    <property type="protein sequence ID" value="AAU42124.1"/>
    <property type="molecule type" value="Genomic_DNA"/>
</dbReference>
<dbReference type="EMBL" id="CP000002">
    <property type="protein sequence ID" value="AAU24761.1"/>
    <property type="molecule type" value="Genomic_DNA"/>
</dbReference>
<dbReference type="RefSeq" id="WP_011198234.1">
    <property type="nucleotide sequence ID" value="NC_006322.1"/>
</dbReference>
<dbReference type="SMR" id="Q65FP0"/>
<dbReference type="STRING" id="279010.BL02576"/>
<dbReference type="KEGG" id="bld:BLi03290"/>
<dbReference type="KEGG" id="bli:BL02576"/>
<dbReference type="PATRIC" id="fig|279010.13.peg.3339"/>
<dbReference type="eggNOG" id="COG1968">
    <property type="taxonomic scope" value="Bacteria"/>
</dbReference>
<dbReference type="HOGENOM" id="CLU_060296_2_0_9"/>
<dbReference type="Proteomes" id="UP000000606">
    <property type="component" value="Chromosome"/>
</dbReference>
<dbReference type="GO" id="GO:0005886">
    <property type="term" value="C:plasma membrane"/>
    <property type="evidence" value="ECO:0007669"/>
    <property type="project" value="UniProtKB-SubCell"/>
</dbReference>
<dbReference type="GO" id="GO:0050380">
    <property type="term" value="F:undecaprenyl-diphosphatase activity"/>
    <property type="evidence" value="ECO:0007669"/>
    <property type="project" value="UniProtKB-UniRule"/>
</dbReference>
<dbReference type="GO" id="GO:0071555">
    <property type="term" value="P:cell wall organization"/>
    <property type="evidence" value="ECO:0007669"/>
    <property type="project" value="UniProtKB-KW"/>
</dbReference>
<dbReference type="GO" id="GO:0009252">
    <property type="term" value="P:peptidoglycan biosynthetic process"/>
    <property type="evidence" value="ECO:0007669"/>
    <property type="project" value="UniProtKB-KW"/>
</dbReference>
<dbReference type="GO" id="GO:0008360">
    <property type="term" value="P:regulation of cell shape"/>
    <property type="evidence" value="ECO:0007669"/>
    <property type="project" value="UniProtKB-KW"/>
</dbReference>
<dbReference type="GO" id="GO:0046677">
    <property type="term" value="P:response to antibiotic"/>
    <property type="evidence" value="ECO:0007669"/>
    <property type="project" value="UniProtKB-UniRule"/>
</dbReference>
<dbReference type="HAMAP" id="MF_01006">
    <property type="entry name" value="Undec_diphosphatase"/>
    <property type="match status" value="1"/>
</dbReference>
<dbReference type="InterPro" id="IPR003824">
    <property type="entry name" value="UppP"/>
</dbReference>
<dbReference type="NCBIfam" id="NF001389">
    <property type="entry name" value="PRK00281.1-2"/>
    <property type="match status" value="1"/>
</dbReference>
<dbReference type="NCBIfam" id="NF001390">
    <property type="entry name" value="PRK00281.1-4"/>
    <property type="match status" value="1"/>
</dbReference>
<dbReference type="NCBIfam" id="TIGR00753">
    <property type="entry name" value="undec_PP_bacA"/>
    <property type="match status" value="1"/>
</dbReference>
<dbReference type="PANTHER" id="PTHR30622">
    <property type="entry name" value="UNDECAPRENYL-DIPHOSPHATASE"/>
    <property type="match status" value="1"/>
</dbReference>
<dbReference type="PANTHER" id="PTHR30622:SF3">
    <property type="entry name" value="UNDECAPRENYL-DIPHOSPHATASE"/>
    <property type="match status" value="1"/>
</dbReference>
<dbReference type="Pfam" id="PF02673">
    <property type="entry name" value="BacA"/>
    <property type="match status" value="1"/>
</dbReference>
<accession>Q65FP0</accession>
<organism>
    <name type="scientific">Bacillus licheniformis (strain ATCC 14580 / DSM 13 / JCM 2505 / CCUG 7422 / NBRC 12200 / NCIMB 9375 / NCTC 10341 / NRRL NRS-1264 / Gibson 46)</name>
    <dbReference type="NCBI Taxonomy" id="279010"/>
    <lineage>
        <taxon>Bacteria</taxon>
        <taxon>Bacillati</taxon>
        <taxon>Bacillota</taxon>
        <taxon>Bacilli</taxon>
        <taxon>Bacillales</taxon>
        <taxon>Bacillaceae</taxon>
        <taxon>Bacillus</taxon>
    </lineage>
</organism>
<evidence type="ECO:0000255" key="1">
    <source>
        <dbReference type="HAMAP-Rule" id="MF_01006"/>
    </source>
</evidence>
<proteinExistence type="inferred from homology"/>
<reference key="1">
    <citation type="journal article" date="2004" name="J. Mol. Microbiol. Biotechnol.">
        <title>The complete genome sequence of Bacillus licheniformis DSM13, an organism with great industrial potential.</title>
        <authorList>
            <person name="Veith B."/>
            <person name="Herzberg C."/>
            <person name="Steckel S."/>
            <person name="Feesche J."/>
            <person name="Maurer K.H."/>
            <person name="Ehrenreich P."/>
            <person name="Baeumer S."/>
            <person name="Henne A."/>
            <person name="Liesegang H."/>
            <person name="Merkl R."/>
            <person name="Ehrenreich A."/>
            <person name="Gottschalk G."/>
        </authorList>
    </citation>
    <scope>NUCLEOTIDE SEQUENCE [LARGE SCALE GENOMIC DNA]</scope>
    <source>
        <strain>ATCC 14580 / DSM 13 / JCM 2505 / CCUG 7422 / NBRC 12200 / NCIMB 9375 / NCTC 10341 / NRRL NRS-1264 / Gibson 46</strain>
    </source>
</reference>
<reference key="2">
    <citation type="journal article" date="2004" name="Genome Biol.">
        <title>Complete genome sequence of the industrial bacterium Bacillus licheniformis and comparisons with closely related Bacillus species.</title>
        <authorList>
            <person name="Rey M.W."/>
            <person name="Ramaiya P."/>
            <person name="Nelson B.A."/>
            <person name="Brody-Karpin S.D."/>
            <person name="Zaretsky E.J."/>
            <person name="Tang M."/>
            <person name="Lopez de Leon A."/>
            <person name="Xiang H."/>
            <person name="Gusti V."/>
            <person name="Clausen I.G."/>
            <person name="Olsen P.B."/>
            <person name="Rasmussen M.D."/>
            <person name="Andersen J.T."/>
            <person name="Joergensen P.L."/>
            <person name="Larsen T.S."/>
            <person name="Sorokin A."/>
            <person name="Bolotin A."/>
            <person name="Lapidus A."/>
            <person name="Galleron N."/>
            <person name="Ehrlich S.D."/>
            <person name="Berka R.M."/>
        </authorList>
    </citation>
    <scope>NUCLEOTIDE SEQUENCE [LARGE SCALE GENOMIC DNA]</scope>
    <source>
        <strain>ATCC 14580 / DSM 13 / JCM 2505 / CCUG 7422 / NBRC 12200 / NCIMB 9375 / NCTC 10341 / NRRL NRS-1264 / Gibson 46</strain>
    </source>
</reference>
<comment type="function">
    <text evidence="1">Catalyzes the dephosphorylation of undecaprenyl diphosphate (UPP). Confers resistance to bacitracin.</text>
</comment>
<comment type="catalytic activity">
    <reaction evidence="1">
        <text>di-trans,octa-cis-undecaprenyl diphosphate + H2O = di-trans,octa-cis-undecaprenyl phosphate + phosphate + H(+)</text>
        <dbReference type="Rhea" id="RHEA:28094"/>
        <dbReference type="ChEBI" id="CHEBI:15377"/>
        <dbReference type="ChEBI" id="CHEBI:15378"/>
        <dbReference type="ChEBI" id="CHEBI:43474"/>
        <dbReference type="ChEBI" id="CHEBI:58405"/>
        <dbReference type="ChEBI" id="CHEBI:60392"/>
        <dbReference type="EC" id="3.6.1.27"/>
    </reaction>
</comment>
<comment type="subcellular location">
    <subcellularLocation>
        <location evidence="1">Cell membrane</location>
        <topology evidence="1">Multi-pass membrane protein</topology>
    </subcellularLocation>
</comment>
<comment type="miscellaneous">
    <text>Bacitracin is thought to be involved in the inhibition of peptidoglycan synthesis by sequestering undecaprenyl diphosphate, thereby reducing the pool of lipid carrier available.</text>
</comment>
<comment type="similarity">
    <text evidence="1">Belongs to the UppP family.</text>
</comment>
<protein>
    <recommendedName>
        <fullName evidence="1">Undecaprenyl-diphosphatase 2</fullName>
        <ecNumber evidence="1">3.6.1.27</ecNumber>
    </recommendedName>
    <alternativeName>
        <fullName evidence="1">Bacitracin resistance protein 2</fullName>
    </alternativeName>
    <alternativeName>
        <fullName evidence="1">Undecaprenyl pyrophosphate phosphatase 2</fullName>
    </alternativeName>
</protein>
<feature type="chain" id="PRO_0000151106" description="Undecaprenyl-diphosphatase 2">
    <location>
        <begin position="1"/>
        <end position="276"/>
    </location>
</feature>
<feature type="transmembrane region" description="Helical" evidence="1">
    <location>
        <begin position="3"/>
        <end position="23"/>
    </location>
</feature>
<feature type="transmembrane region" description="Helical" evidence="1">
    <location>
        <begin position="48"/>
        <end position="68"/>
    </location>
</feature>
<feature type="transmembrane region" description="Helical" evidence="1">
    <location>
        <begin position="92"/>
        <end position="112"/>
    </location>
</feature>
<feature type="transmembrane region" description="Helical" evidence="1">
    <location>
        <begin position="119"/>
        <end position="139"/>
    </location>
</feature>
<feature type="transmembrane region" description="Helical" evidence="1">
    <location>
        <begin position="196"/>
        <end position="216"/>
    </location>
</feature>
<feature type="transmembrane region" description="Helical" evidence="1">
    <location>
        <begin position="225"/>
        <end position="245"/>
    </location>
</feature>
<feature type="transmembrane region" description="Helical" evidence="1">
    <location>
        <begin position="255"/>
        <end position="275"/>
    </location>
</feature>
<name>UPPP2_BACLD</name>
<keyword id="KW-0046">Antibiotic resistance</keyword>
<keyword id="KW-1003">Cell membrane</keyword>
<keyword id="KW-0133">Cell shape</keyword>
<keyword id="KW-0961">Cell wall biogenesis/degradation</keyword>
<keyword id="KW-0378">Hydrolase</keyword>
<keyword id="KW-0472">Membrane</keyword>
<keyword id="KW-0573">Peptidoglycan synthesis</keyword>
<keyword id="KW-1185">Reference proteome</keyword>
<keyword id="KW-0812">Transmembrane</keyword>
<keyword id="KW-1133">Transmembrane helix</keyword>